<keyword id="KW-0997">Cell inner membrane</keyword>
<keyword id="KW-1003">Cell membrane</keyword>
<keyword id="KW-0249">Electron transport</keyword>
<keyword id="KW-0472">Membrane</keyword>
<keyword id="KW-1278">Translocase</keyword>
<keyword id="KW-0812">Transmembrane</keyword>
<keyword id="KW-1133">Transmembrane helix</keyword>
<keyword id="KW-0813">Transport</keyword>
<reference key="1">
    <citation type="journal article" date="2001" name="Nature">
        <title>Complete genome sequence of a multiple drug resistant Salmonella enterica serovar Typhi CT18.</title>
        <authorList>
            <person name="Parkhill J."/>
            <person name="Dougan G."/>
            <person name="James K.D."/>
            <person name="Thomson N.R."/>
            <person name="Pickard D."/>
            <person name="Wain J."/>
            <person name="Churcher C.M."/>
            <person name="Mungall K.L."/>
            <person name="Bentley S.D."/>
            <person name="Holden M.T.G."/>
            <person name="Sebaihia M."/>
            <person name="Baker S."/>
            <person name="Basham D."/>
            <person name="Brooks K."/>
            <person name="Chillingworth T."/>
            <person name="Connerton P."/>
            <person name="Cronin A."/>
            <person name="Davis P."/>
            <person name="Davies R.M."/>
            <person name="Dowd L."/>
            <person name="White N."/>
            <person name="Farrar J."/>
            <person name="Feltwell T."/>
            <person name="Hamlin N."/>
            <person name="Haque A."/>
            <person name="Hien T.T."/>
            <person name="Holroyd S."/>
            <person name="Jagels K."/>
            <person name="Krogh A."/>
            <person name="Larsen T.S."/>
            <person name="Leather S."/>
            <person name="Moule S."/>
            <person name="O'Gaora P."/>
            <person name="Parry C."/>
            <person name="Quail M.A."/>
            <person name="Rutherford K.M."/>
            <person name="Simmonds M."/>
            <person name="Skelton J."/>
            <person name="Stevens K."/>
            <person name="Whitehead S."/>
            <person name="Barrell B.G."/>
        </authorList>
    </citation>
    <scope>NUCLEOTIDE SEQUENCE [LARGE SCALE GENOMIC DNA]</scope>
    <source>
        <strain>CT18</strain>
    </source>
</reference>
<reference key="2">
    <citation type="journal article" date="2003" name="J. Bacteriol.">
        <title>Comparative genomics of Salmonella enterica serovar Typhi strains Ty2 and CT18.</title>
        <authorList>
            <person name="Deng W."/>
            <person name="Liou S.-R."/>
            <person name="Plunkett G. III"/>
            <person name="Mayhew G.F."/>
            <person name="Rose D.J."/>
            <person name="Burland V."/>
            <person name="Kodoyianni V."/>
            <person name="Schwartz D.C."/>
            <person name="Blattner F.R."/>
        </authorList>
    </citation>
    <scope>NUCLEOTIDE SEQUENCE [LARGE SCALE GENOMIC DNA]</scope>
    <source>
        <strain>ATCC 700931 / Ty2</strain>
    </source>
</reference>
<sequence>MSEIKDIVVQGLWKNNSALVQLLGLCPLLAVTSTATNALGLGLATTLVLTLTNLTVSALRRWTPAEIRIPIYVMIIASVVSAVQMLINAYAFGLYQSLGIFIPLIVTNCIVVGRAEAFAAKKGPWLSALDGFSIGMGATGAMFVLGSLREILGNGTLFDGADSLLGGWAKVLRVEIFHTDSPFLLAMLPPGAFIGLGLMLAVKYLIDEKMKKRRAETAPSAVPAGETGKV</sequence>
<feature type="chain" id="PRO_0000214280" description="Ion-translocating oxidoreductase complex subunit E">
    <location>
        <begin position="1"/>
        <end position="230"/>
    </location>
</feature>
<feature type="transmembrane region" description="Helical" evidence="1">
    <location>
        <begin position="18"/>
        <end position="38"/>
    </location>
</feature>
<feature type="transmembrane region" description="Helical" evidence="1">
    <location>
        <begin position="39"/>
        <end position="59"/>
    </location>
</feature>
<feature type="transmembrane region" description="Helical" evidence="1">
    <location>
        <begin position="63"/>
        <end position="83"/>
    </location>
</feature>
<feature type="transmembrane region" description="Helical" evidence="1">
    <location>
        <begin position="86"/>
        <end position="106"/>
    </location>
</feature>
<feature type="transmembrane region" description="Helical" evidence="1">
    <location>
        <begin position="125"/>
        <end position="145"/>
    </location>
</feature>
<feature type="transmembrane region" description="Helical" evidence="1">
    <location>
        <begin position="182"/>
        <end position="202"/>
    </location>
</feature>
<organism>
    <name type="scientific">Salmonella typhi</name>
    <dbReference type="NCBI Taxonomy" id="90370"/>
    <lineage>
        <taxon>Bacteria</taxon>
        <taxon>Pseudomonadati</taxon>
        <taxon>Pseudomonadota</taxon>
        <taxon>Gammaproteobacteria</taxon>
        <taxon>Enterobacterales</taxon>
        <taxon>Enterobacteriaceae</taxon>
        <taxon>Salmonella</taxon>
    </lineage>
</organism>
<evidence type="ECO:0000255" key="1">
    <source>
        <dbReference type="HAMAP-Rule" id="MF_00478"/>
    </source>
</evidence>
<proteinExistence type="inferred from homology"/>
<comment type="function">
    <text evidence="1">Part of a membrane-bound complex that couples electron transfer with translocation of ions across the membrane. Required to maintain the reduced state of SoxR.</text>
</comment>
<comment type="subunit">
    <text evidence="1">The complex is composed of six subunits: RsxA, RsxB, RsxC, RsxD, RsxE and RsxG.</text>
</comment>
<comment type="subcellular location">
    <subcellularLocation>
        <location evidence="1">Cell inner membrane</location>
        <topology evidence="1">Multi-pass membrane protein</topology>
    </subcellularLocation>
</comment>
<comment type="similarity">
    <text evidence="1">Belongs to the NqrDE/RnfAE family.</text>
</comment>
<dbReference type="EC" id="7.-.-.-" evidence="1"/>
<dbReference type="EMBL" id="AL513382">
    <property type="protein sequence ID" value="CAD01913.1"/>
    <property type="molecule type" value="Genomic_DNA"/>
</dbReference>
<dbReference type="EMBL" id="AE014613">
    <property type="protein sequence ID" value="AAO68972.1"/>
    <property type="molecule type" value="Genomic_DNA"/>
</dbReference>
<dbReference type="RefSeq" id="NP_456076.1">
    <property type="nucleotide sequence ID" value="NC_003198.1"/>
</dbReference>
<dbReference type="RefSeq" id="WP_001289628.1">
    <property type="nucleotide sequence ID" value="NZ_WSUR01000011.1"/>
</dbReference>
<dbReference type="SMR" id="P65541"/>
<dbReference type="STRING" id="220341.gene:17585603"/>
<dbReference type="KEGG" id="stt:t1322"/>
<dbReference type="KEGG" id="sty:STY1668"/>
<dbReference type="PATRIC" id="fig|220341.7.peg.1678"/>
<dbReference type="eggNOG" id="COG4660">
    <property type="taxonomic scope" value="Bacteria"/>
</dbReference>
<dbReference type="HOGENOM" id="CLU_046659_1_0_6"/>
<dbReference type="OMA" id="RIEVFHT"/>
<dbReference type="OrthoDB" id="9782945at2"/>
<dbReference type="Proteomes" id="UP000000541">
    <property type="component" value="Chromosome"/>
</dbReference>
<dbReference type="Proteomes" id="UP000002670">
    <property type="component" value="Chromosome"/>
</dbReference>
<dbReference type="GO" id="GO:0005886">
    <property type="term" value="C:plasma membrane"/>
    <property type="evidence" value="ECO:0007669"/>
    <property type="project" value="UniProtKB-SubCell"/>
</dbReference>
<dbReference type="GO" id="GO:0022900">
    <property type="term" value="P:electron transport chain"/>
    <property type="evidence" value="ECO:0007669"/>
    <property type="project" value="UniProtKB-UniRule"/>
</dbReference>
<dbReference type="HAMAP" id="MF_00478">
    <property type="entry name" value="RsxE_RnfE"/>
    <property type="match status" value="1"/>
</dbReference>
<dbReference type="InterPro" id="IPR003667">
    <property type="entry name" value="NqrDE/RnfAE"/>
</dbReference>
<dbReference type="InterPro" id="IPR010968">
    <property type="entry name" value="RnfE"/>
</dbReference>
<dbReference type="NCBIfam" id="NF009070">
    <property type="entry name" value="PRK12405.1"/>
    <property type="match status" value="1"/>
</dbReference>
<dbReference type="NCBIfam" id="TIGR01948">
    <property type="entry name" value="rnfE"/>
    <property type="match status" value="1"/>
</dbReference>
<dbReference type="PANTHER" id="PTHR30586">
    <property type="entry name" value="ELECTRON TRANSPORT COMPLEX PROTEIN RNFE"/>
    <property type="match status" value="1"/>
</dbReference>
<dbReference type="PANTHER" id="PTHR30586:SF0">
    <property type="entry name" value="ION-TRANSLOCATING OXIDOREDUCTASE COMPLEX SUBUNIT E"/>
    <property type="match status" value="1"/>
</dbReference>
<dbReference type="Pfam" id="PF02508">
    <property type="entry name" value="Rnf-Nqr"/>
    <property type="match status" value="1"/>
</dbReference>
<dbReference type="PIRSF" id="PIRSF006102">
    <property type="entry name" value="NQR_DE"/>
    <property type="match status" value="1"/>
</dbReference>
<name>RSXE_SALTI</name>
<gene>
    <name evidence="1" type="primary">rsxE</name>
    <name type="ordered locus">STY1668</name>
    <name type="ordered locus">t1322</name>
</gene>
<protein>
    <recommendedName>
        <fullName evidence="1">Ion-translocating oxidoreductase complex subunit E</fullName>
        <ecNumber evidence="1">7.-.-.-</ecNumber>
    </recommendedName>
    <alternativeName>
        <fullName evidence="1">Rsx electron transport complex subunit E</fullName>
    </alternativeName>
</protein>
<accession>P65541</accession>
<accession>Q8XEX9</accession>